<protein>
    <recommendedName>
        <fullName evidence="1">UPF0246 protein Shew185_1115</fullName>
    </recommendedName>
</protein>
<gene>
    <name type="ordered locus">Shew185_1115</name>
</gene>
<evidence type="ECO:0000255" key="1">
    <source>
        <dbReference type="HAMAP-Rule" id="MF_00652"/>
    </source>
</evidence>
<sequence length="257" mass="28820">MLILVSPAKTLDFEQPPLTQVYSQPDFLTHSQELIQVCRQLTPSDISTLMKVSDKIAGLNAARFGQWQPGFSLDNAKQAIFAFRGDVYTGFDADSLSEDEIAQTQSQLRILSGLYGLLRPLDLIMPYRLEMGTALSNPKGKNLYEFWGDTLTQAVNEALAESGSDIIVNLASNEYFKAIKPKKLQGQLISPVFKDCKNGQYKVISFFAKRARGMMARYIITNKVNTLAELKAFNLAGYYYSEEQSSPTNPTFLREEQ</sequence>
<reference key="1">
    <citation type="submission" date="2007-07" db="EMBL/GenBank/DDBJ databases">
        <title>Complete sequence of chromosome of Shewanella baltica OS185.</title>
        <authorList>
            <consortium name="US DOE Joint Genome Institute"/>
            <person name="Copeland A."/>
            <person name="Lucas S."/>
            <person name="Lapidus A."/>
            <person name="Barry K."/>
            <person name="Glavina del Rio T."/>
            <person name="Dalin E."/>
            <person name="Tice H."/>
            <person name="Pitluck S."/>
            <person name="Sims D."/>
            <person name="Brettin T."/>
            <person name="Bruce D."/>
            <person name="Detter J.C."/>
            <person name="Han C."/>
            <person name="Schmutz J."/>
            <person name="Larimer F."/>
            <person name="Land M."/>
            <person name="Hauser L."/>
            <person name="Kyrpides N."/>
            <person name="Mikhailova N."/>
            <person name="Brettar I."/>
            <person name="Rodrigues J."/>
            <person name="Konstantinidis K."/>
            <person name="Tiedje J."/>
            <person name="Richardson P."/>
        </authorList>
    </citation>
    <scope>NUCLEOTIDE SEQUENCE [LARGE SCALE GENOMIC DNA]</scope>
    <source>
        <strain>OS185</strain>
    </source>
</reference>
<accession>A6WKC8</accession>
<proteinExistence type="inferred from homology"/>
<comment type="similarity">
    <text evidence="1">Belongs to the UPF0246 family.</text>
</comment>
<organism>
    <name type="scientific">Shewanella baltica (strain OS185)</name>
    <dbReference type="NCBI Taxonomy" id="402882"/>
    <lineage>
        <taxon>Bacteria</taxon>
        <taxon>Pseudomonadati</taxon>
        <taxon>Pseudomonadota</taxon>
        <taxon>Gammaproteobacteria</taxon>
        <taxon>Alteromonadales</taxon>
        <taxon>Shewanellaceae</taxon>
        <taxon>Shewanella</taxon>
    </lineage>
</organism>
<name>Y1115_SHEB8</name>
<dbReference type="EMBL" id="CP000753">
    <property type="protein sequence ID" value="ABS07267.1"/>
    <property type="molecule type" value="Genomic_DNA"/>
</dbReference>
<dbReference type="RefSeq" id="WP_012088522.1">
    <property type="nucleotide sequence ID" value="NC_009665.1"/>
</dbReference>
<dbReference type="SMR" id="A6WKC8"/>
<dbReference type="KEGG" id="sbm:Shew185_1115"/>
<dbReference type="HOGENOM" id="CLU_061989_0_0_6"/>
<dbReference type="GO" id="GO:0005829">
    <property type="term" value="C:cytosol"/>
    <property type="evidence" value="ECO:0007669"/>
    <property type="project" value="TreeGrafter"/>
</dbReference>
<dbReference type="GO" id="GO:0033194">
    <property type="term" value="P:response to hydroperoxide"/>
    <property type="evidence" value="ECO:0007669"/>
    <property type="project" value="TreeGrafter"/>
</dbReference>
<dbReference type="HAMAP" id="MF_00652">
    <property type="entry name" value="UPF0246"/>
    <property type="match status" value="1"/>
</dbReference>
<dbReference type="InterPro" id="IPR005583">
    <property type="entry name" value="YaaA"/>
</dbReference>
<dbReference type="NCBIfam" id="NF002541">
    <property type="entry name" value="PRK02101.1-1"/>
    <property type="match status" value="1"/>
</dbReference>
<dbReference type="NCBIfam" id="NF002542">
    <property type="entry name" value="PRK02101.1-3"/>
    <property type="match status" value="1"/>
</dbReference>
<dbReference type="PANTHER" id="PTHR30283:SF4">
    <property type="entry name" value="PEROXIDE STRESS RESISTANCE PROTEIN YAAA"/>
    <property type="match status" value="1"/>
</dbReference>
<dbReference type="PANTHER" id="PTHR30283">
    <property type="entry name" value="PEROXIDE STRESS RESPONSE PROTEIN YAAA"/>
    <property type="match status" value="1"/>
</dbReference>
<dbReference type="Pfam" id="PF03883">
    <property type="entry name" value="H2O2_YaaD"/>
    <property type="match status" value="1"/>
</dbReference>
<feature type="chain" id="PRO_1000061634" description="UPF0246 protein Shew185_1115">
    <location>
        <begin position="1"/>
        <end position="257"/>
    </location>
</feature>